<reference key="1">
    <citation type="journal article" date="1990" name="J. Mol. Evol.">
        <title>Amino acid sequences of stomach and nonstomach lysozymes of ruminants.</title>
        <authorList>
            <person name="Jolles J."/>
            <person name="Prager E.M."/>
            <person name="Alnemri E.S."/>
            <person name="Jolles P."/>
            <person name="Ibrahimi I.M."/>
            <person name="Wilson A.C."/>
        </authorList>
    </citation>
    <scope>PROTEIN SEQUENCE</scope>
    <source>
        <tissue>Stomach</tissue>
    </source>
</reference>
<reference key="2">
    <citation type="journal article" date="1990" name="J. Mol. Evol.">
        <authorList>
            <person name="Jolles J."/>
            <person name="Prager E.M."/>
            <person name="Alnemri E.S."/>
            <person name="Jolles P."/>
            <person name="Ibrahimi I.M."/>
            <person name="Wilson A.C."/>
        </authorList>
    </citation>
    <scope>ERRATUM OF PUBMED:2111849</scope>
</reference>
<name>LYSC_CAMDR</name>
<protein>
    <recommendedName>
        <fullName>Lysozyme C</fullName>
        <ecNumber>3.2.1.17</ecNumber>
    </recommendedName>
    <alternativeName>
        <fullName>1,4-beta-N-acetylmuramidase</fullName>
    </alternativeName>
</protein>
<dbReference type="EC" id="3.2.1.17"/>
<dbReference type="SMR" id="P37712"/>
<dbReference type="STRING" id="9838.ENSCDRP00005029140"/>
<dbReference type="CAZy" id="GH22">
    <property type="family name" value="Glycoside Hydrolase Family 22"/>
</dbReference>
<dbReference type="GO" id="GO:0003796">
    <property type="term" value="F:lysozyme activity"/>
    <property type="evidence" value="ECO:0007669"/>
    <property type="project" value="UniProtKB-EC"/>
</dbReference>
<dbReference type="GO" id="GO:0050829">
    <property type="term" value="P:defense response to Gram-negative bacterium"/>
    <property type="evidence" value="ECO:0007669"/>
    <property type="project" value="TreeGrafter"/>
</dbReference>
<dbReference type="GO" id="GO:0050830">
    <property type="term" value="P:defense response to Gram-positive bacterium"/>
    <property type="evidence" value="ECO:0007669"/>
    <property type="project" value="TreeGrafter"/>
</dbReference>
<dbReference type="GO" id="GO:0007586">
    <property type="term" value="P:digestion"/>
    <property type="evidence" value="ECO:0007669"/>
    <property type="project" value="UniProtKB-KW"/>
</dbReference>
<dbReference type="GO" id="GO:0031640">
    <property type="term" value="P:killing of cells of another organism"/>
    <property type="evidence" value="ECO:0007669"/>
    <property type="project" value="UniProtKB-KW"/>
</dbReference>
<dbReference type="CDD" id="cd16897">
    <property type="entry name" value="LYZ_C"/>
    <property type="match status" value="1"/>
</dbReference>
<dbReference type="FunFam" id="1.10.530.10:FF:000001">
    <property type="entry name" value="Lysozyme C"/>
    <property type="match status" value="1"/>
</dbReference>
<dbReference type="Gene3D" id="1.10.530.10">
    <property type="match status" value="1"/>
</dbReference>
<dbReference type="InterPro" id="IPR001916">
    <property type="entry name" value="Glyco_hydro_22"/>
</dbReference>
<dbReference type="InterPro" id="IPR019799">
    <property type="entry name" value="Glyco_hydro_22_CS"/>
</dbReference>
<dbReference type="InterPro" id="IPR000974">
    <property type="entry name" value="Glyco_hydro_22_lys"/>
</dbReference>
<dbReference type="InterPro" id="IPR023346">
    <property type="entry name" value="Lysozyme-like_dom_sf"/>
</dbReference>
<dbReference type="PANTHER" id="PTHR11407">
    <property type="entry name" value="LYSOZYME C"/>
    <property type="match status" value="1"/>
</dbReference>
<dbReference type="PANTHER" id="PTHR11407:SF28">
    <property type="entry name" value="LYSOZYME C"/>
    <property type="match status" value="1"/>
</dbReference>
<dbReference type="Pfam" id="PF00062">
    <property type="entry name" value="Lys"/>
    <property type="match status" value="1"/>
</dbReference>
<dbReference type="PRINTS" id="PR00137">
    <property type="entry name" value="LYSOZYME"/>
</dbReference>
<dbReference type="PRINTS" id="PR00135">
    <property type="entry name" value="LYZLACT"/>
</dbReference>
<dbReference type="SMART" id="SM00263">
    <property type="entry name" value="LYZ1"/>
    <property type="match status" value="1"/>
</dbReference>
<dbReference type="SUPFAM" id="SSF53955">
    <property type="entry name" value="Lysozyme-like"/>
    <property type="match status" value="1"/>
</dbReference>
<dbReference type="PROSITE" id="PS00128">
    <property type="entry name" value="GLYCOSYL_HYDROL_F22_1"/>
    <property type="match status" value="1"/>
</dbReference>
<dbReference type="PROSITE" id="PS51348">
    <property type="entry name" value="GLYCOSYL_HYDROL_F22_2"/>
    <property type="match status" value="1"/>
</dbReference>
<gene>
    <name type="primary">LYZ</name>
</gene>
<comment type="function">
    <text>Lysozymes have primarily a bacteriolytic function; those in tissues and body fluids are associated with the monocyte-macrophage system and enhance the activity of immunoagents.</text>
</comment>
<comment type="catalytic activity">
    <reaction>
        <text>Hydrolysis of (1-&gt;4)-beta-linkages between N-acetylmuramic acid and N-acetyl-D-glucosamine residues in a peptidoglycan and between N-acetyl-D-glucosamine residues in chitodextrins.</text>
        <dbReference type="EC" id="3.2.1.17"/>
    </reaction>
</comment>
<comment type="subunit">
    <text evidence="1">Monomer.</text>
</comment>
<comment type="miscellaneous">
    <text>Lysozyme C is capable of both hydrolysis and transglycosylation; it also shows a slight esterase activity. It acts rapidly on both peptide-substituted and unsubstituted peptidoglycan, and slowly on chitin oligosaccharides.</text>
</comment>
<comment type="similarity">
    <text evidence="2">Belongs to the glycosyl hydrolase 22 family.</text>
</comment>
<accession>P37712</accession>
<sequence>KVWERCALARKLKELGMDGYRGVSLANWMCLTKWESDYNTDATNYNPSSESTDYGIFQINSRYWCNNGKTPHAVNGCGINCNVLLEDDITKAVQCAKRVVRDPQGVRAWVAWKNHCEGHDVEQYVEGCDL</sequence>
<keyword id="KW-0929">Antimicrobial</keyword>
<keyword id="KW-0081">Bacteriolytic enzyme</keyword>
<keyword id="KW-0222">Digestion</keyword>
<keyword id="KW-0903">Direct protein sequencing</keyword>
<keyword id="KW-1015">Disulfide bond</keyword>
<keyword id="KW-0326">Glycosidase</keyword>
<keyword id="KW-0378">Hydrolase</keyword>
<feature type="chain" id="PRO_0000208844" description="Lysozyme C">
    <location>
        <begin position="1"/>
        <end position="130"/>
    </location>
</feature>
<feature type="domain" description="C-type lysozyme" evidence="2">
    <location>
        <begin position="1"/>
        <end position="130"/>
    </location>
</feature>
<feature type="active site" evidence="2">
    <location>
        <position position="35"/>
    </location>
</feature>
<feature type="active site" evidence="2">
    <location>
        <position position="53"/>
    </location>
</feature>
<feature type="disulfide bond" evidence="2">
    <location>
        <begin position="6"/>
        <end position="128"/>
    </location>
</feature>
<feature type="disulfide bond" evidence="2">
    <location>
        <begin position="30"/>
        <end position="116"/>
    </location>
</feature>
<feature type="disulfide bond" evidence="2">
    <location>
        <begin position="65"/>
        <end position="81"/>
    </location>
</feature>
<feature type="disulfide bond" evidence="2">
    <location>
        <begin position="77"/>
        <end position="95"/>
    </location>
</feature>
<evidence type="ECO:0000250" key="1"/>
<evidence type="ECO:0000255" key="2">
    <source>
        <dbReference type="PROSITE-ProRule" id="PRU00680"/>
    </source>
</evidence>
<proteinExistence type="evidence at protein level"/>
<organism>
    <name type="scientific">Camelus dromedarius</name>
    <name type="common">Dromedary</name>
    <name type="synonym">Arabian camel</name>
    <dbReference type="NCBI Taxonomy" id="9838"/>
    <lineage>
        <taxon>Eukaryota</taxon>
        <taxon>Metazoa</taxon>
        <taxon>Chordata</taxon>
        <taxon>Craniata</taxon>
        <taxon>Vertebrata</taxon>
        <taxon>Euteleostomi</taxon>
        <taxon>Mammalia</taxon>
        <taxon>Eutheria</taxon>
        <taxon>Laurasiatheria</taxon>
        <taxon>Artiodactyla</taxon>
        <taxon>Tylopoda</taxon>
        <taxon>Camelidae</taxon>
        <taxon>Camelus</taxon>
    </lineage>
</organism>